<accession>Q5BFG8</accession>
<accession>C8VRC8</accession>
<accession>Q1HFV7</accession>
<sequence>MSFQKVDPAQIESVLSKLTLEEKISLLAGKNFWETQDYPEKGVPPVKTSDGPNGARGATFKGGVTAACFPASSLLAATWDLDAAKHIGEALADETRSKGARVLLAPTVCIHRHPLGGRNFESFSEDPFLAGKLAAQYIKGLQGNGVAATIKHYAANEQETCRFTVNEHITERALREIYLKPFEIAIKESNPLAVMTAYNIVNGTHADSNNFLLRDVLRGEWGWKGLVMSDWGGTNSTADALNAGLDLEMPGPTRWRKVDEVLAVVKSGAVLEETIDERARNVLELLAKLNCFENPTIPEEKAINRPEHQKLIRSVGSQGLVLLKNEGDVLPLRKEILTNKKVALLGFAREALIHGGGSASVNAHYRVTPEEGLRAALGDTVEFEYAKGAHTFRQLPLMSDNVVNLEGQPGWTLDFFADEEPNGEPGSSISSEQPSYIPLFVKESWGSVRASAHFTPTQSGKHYFGMSGLGRSKLLIDGEVIYEQKLNCPDSMGFLLGGVEEPEIQYSFEAGKTYAVEVVSVKPTSKGGLALLDGFIGFRLGFMTEEEHNRDLLSEAVDVAKRSDIAIVFTGHTPDWETEGQDQISFHLPSNGSQDRLVAAVGAANPNTVVVNCTGVAVAMPWLDKVKAVVQAWFPGQEAGNAIADVLTGAVNPSGRLPVSFPRAIEDAPAHGNFPGDYTDGKDNRRHLEVTYKEGVFVGYRHYDLSEANRAKVLFPFGYGLSYTTFTHANHKASATSRNTVEVAVDVTNVGTCAGADVVQVYAGAKLAVPENPVKELVGFAKVHLKPGETKTANITFEVRQLTHFTERSGKWELESGDYEISIGQSVRDITGKVEIGLEAQNYKP</sequence>
<evidence type="ECO:0000250" key="1"/>
<evidence type="ECO:0000255" key="2"/>
<evidence type="ECO:0000255" key="3">
    <source>
        <dbReference type="PROSITE-ProRule" id="PRU01164"/>
    </source>
</evidence>
<evidence type="ECO:0000269" key="4">
    <source>
    </source>
</evidence>
<evidence type="ECO:0000305" key="5"/>
<dbReference type="EC" id="3.2.1.21"/>
<dbReference type="EMBL" id="DQ490467">
    <property type="protein sequence ID" value="ABF50843.1"/>
    <property type="molecule type" value="mRNA"/>
</dbReference>
<dbReference type="EMBL" id="AACD01000011">
    <property type="protein sequence ID" value="EAA65189.1"/>
    <property type="molecule type" value="Genomic_DNA"/>
</dbReference>
<dbReference type="EMBL" id="BN001308">
    <property type="protein sequence ID" value="CBF88936.1"/>
    <property type="molecule type" value="Genomic_DNA"/>
</dbReference>
<dbReference type="RefSeq" id="XP_658316.1">
    <property type="nucleotide sequence ID" value="XM_653224.1"/>
</dbReference>
<dbReference type="SMR" id="Q5BFG8"/>
<dbReference type="STRING" id="227321.Q5BFG8"/>
<dbReference type="CAZy" id="GH3">
    <property type="family name" value="Glycoside Hydrolase Family 3"/>
</dbReference>
<dbReference type="GlyCosmos" id="Q5BFG8">
    <property type="glycosylation" value="5 sites, No reported glycans"/>
</dbReference>
<dbReference type="EnsemblFungi" id="CBF88936">
    <property type="protein sequence ID" value="CBF88936"/>
    <property type="gene ID" value="ANIA_00712"/>
</dbReference>
<dbReference type="KEGG" id="ani:ANIA_00712"/>
<dbReference type="VEuPathDB" id="FungiDB:AN0712"/>
<dbReference type="eggNOG" id="ENOG502QR4D">
    <property type="taxonomic scope" value="Eukaryota"/>
</dbReference>
<dbReference type="HOGENOM" id="CLU_004542_4_0_1"/>
<dbReference type="InParanoid" id="Q5BFG8"/>
<dbReference type="OMA" id="GAHTFRM"/>
<dbReference type="OrthoDB" id="47059at2759"/>
<dbReference type="UniPathway" id="UPA00696"/>
<dbReference type="Proteomes" id="UP000000560">
    <property type="component" value="Chromosome VIII"/>
</dbReference>
<dbReference type="GO" id="GO:0008422">
    <property type="term" value="F:beta-glucosidase activity"/>
    <property type="evidence" value="ECO:0000314"/>
    <property type="project" value="UniProtKB"/>
</dbReference>
<dbReference type="GO" id="GO:0030245">
    <property type="term" value="P:cellulose catabolic process"/>
    <property type="evidence" value="ECO:0007669"/>
    <property type="project" value="UniProtKB-UniPathway"/>
</dbReference>
<dbReference type="GO" id="GO:0009251">
    <property type="term" value="P:glucan catabolic process"/>
    <property type="evidence" value="ECO:0000314"/>
    <property type="project" value="UniProtKB"/>
</dbReference>
<dbReference type="FunFam" id="2.60.40.10:FF:004849">
    <property type="match status" value="1"/>
</dbReference>
<dbReference type="FunFam" id="3.20.20.300:FF:000006">
    <property type="entry name" value="Beta-glucosidase H"/>
    <property type="match status" value="1"/>
</dbReference>
<dbReference type="FunFam" id="2.60.120.260:FF:000114">
    <property type="entry name" value="Glycoside hydrolase family 3 protein"/>
    <property type="match status" value="1"/>
</dbReference>
<dbReference type="Gene3D" id="2.60.120.260">
    <property type="entry name" value="Galactose-binding domain-like"/>
    <property type="match status" value="1"/>
</dbReference>
<dbReference type="Gene3D" id="3.40.50.1700">
    <property type="entry name" value="Glycoside hydrolase family 3 C-terminal domain"/>
    <property type="match status" value="1"/>
</dbReference>
<dbReference type="Gene3D" id="3.20.20.300">
    <property type="entry name" value="Glycoside hydrolase, family 3, N-terminal domain"/>
    <property type="match status" value="1"/>
</dbReference>
<dbReference type="Gene3D" id="2.60.40.10">
    <property type="entry name" value="Immunoglobulins"/>
    <property type="match status" value="1"/>
</dbReference>
<dbReference type="InterPro" id="IPR050288">
    <property type="entry name" value="Cellulose_deg_GH3"/>
</dbReference>
<dbReference type="InterPro" id="IPR026891">
    <property type="entry name" value="Fn3-like"/>
</dbReference>
<dbReference type="InterPro" id="IPR019800">
    <property type="entry name" value="Glyco_hydro_3_AS"/>
</dbReference>
<dbReference type="InterPro" id="IPR002772">
    <property type="entry name" value="Glyco_hydro_3_C"/>
</dbReference>
<dbReference type="InterPro" id="IPR036881">
    <property type="entry name" value="Glyco_hydro_3_C_sf"/>
</dbReference>
<dbReference type="InterPro" id="IPR001764">
    <property type="entry name" value="Glyco_hydro_3_N"/>
</dbReference>
<dbReference type="InterPro" id="IPR036962">
    <property type="entry name" value="Glyco_hydro_3_N_sf"/>
</dbReference>
<dbReference type="InterPro" id="IPR017853">
    <property type="entry name" value="Glycoside_hydrolase_SF"/>
</dbReference>
<dbReference type="InterPro" id="IPR013783">
    <property type="entry name" value="Ig-like_fold"/>
</dbReference>
<dbReference type="InterPro" id="IPR037524">
    <property type="entry name" value="PA14/GLEYA"/>
</dbReference>
<dbReference type="PANTHER" id="PTHR42715">
    <property type="entry name" value="BETA-GLUCOSIDASE"/>
    <property type="match status" value="1"/>
</dbReference>
<dbReference type="PANTHER" id="PTHR42715:SF3">
    <property type="entry name" value="BETA-GLUCOSIDASE B-RELATED"/>
    <property type="match status" value="1"/>
</dbReference>
<dbReference type="Pfam" id="PF14310">
    <property type="entry name" value="Fn3-like"/>
    <property type="match status" value="1"/>
</dbReference>
<dbReference type="Pfam" id="PF00933">
    <property type="entry name" value="Glyco_hydro_3"/>
    <property type="match status" value="1"/>
</dbReference>
<dbReference type="Pfam" id="PF01915">
    <property type="entry name" value="Glyco_hydro_3_C"/>
    <property type="match status" value="1"/>
</dbReference>
<dbReference type="PRINTS" id="PR00133">
    <property type="entry name" value="GLHYDRLASE3"/>
</dbReference>
<dbReference type="SMART" id="SM01217">
    <property type="entry name" value="Fn3_like"/>
    <property type="match status" value="1"/>
</dbReference>
<dbReference type="SUPFAM" id="SSF51445">
    <property type="entry name" value="(Trans)glycosidases"/>
    <property type="match status" value="1"/>
</dbReference>
<dbReference type="SUPFAM" id="SSF52279">
    <property type="entry name" value="Beta-D-glucan exohydrolase, C-terminal domain"/>
    <property type="match status" value="1"/>
</dbReference>
<dbReference type="PROSITE" id="PS00775">
    <property type="entry name" value="GLYCOSYL_HYDROL_F3"/>
    <property type="match status" value="1"/>
</dbReference>
<dbReference type="PROSITE" id="PS51820">
    <property type="entry name" value="PA14"/>
    <property type="match status" value="1"/>
</dbReference>
<keyword id="KW-0119">Carbohydrate metabolism</keyword>
<keyword id="KW-0136">Cellulose degradation</keyword>
<keyword id="KW-0325">Glycoprotein</keyword>
<keyword id="KW-0326">Glycosidase</keyword>
<keyword id="KW-0378">Hydrolase</keyword>
<keyword id="KW-0624">Polysaccharide degradation</keyword>
<keyword id="KW-1185">Reference proteome</keyword>
<gene>
    <name type="primary">bglB</name>
    <name type="ORF">AN0712</name>
</gene>
<feature type="chain" id="PRO_0000394102" description="Beta-glucosidase B">
    <location>
        <begin position="1"/>
        <end position="845"/>
    </location>
</feature>
<feature type="domain" description="PA14" evidence="3">
    <location>
        <begin position="406"/>
        <end position="557"/>
    </location>
</feature>
<feature type="active site" evidence="1">
    <location>
        <position position="230"/>
    </location>
</feature>
<feature type="glycosylation site" description="N-linked (GlcNAc...) asparagine" evidence="2">
    <location>
        <position position="202"/>
    </location>
</feature>
<feature type="glycosylation site" description="N-linked (GlcNAc...) asparagine" evidence="2">
    <location>
        <position position="235"/>
    </location>
</feature>
<feature type="glycosylation site" description="N-linked (GlcNAc...) asparagine" evidence="2">
    <location>
        <position position="591"/>
    </location>
</feature>
<feature type="glycosylation site" description="N-linked (GlcNAc...) asparagine" evidence="2">
    <location>
        <position position="612"/>
    </location>
</feature>
<feature type="glycosylation site" description="N-linked (GlcNAc...) asparagine" evidence="2">
    <location>
        <position position="794"/>
    </location>
</feature>
<reference key="1">
    <citation type="journal article" date="2006" name="Proc. Natl. Acad. Sci. U.S.A.">
        <title>Development and application of a suite of polysaccharide-degrading enzymes for analyzing plant cell walls.</title>
        <authorList>
            <person name="Bauer S."/>
            <person name="Vasu P."/>
            <person name="Persson S."/>
            <person name="Mort A.J."/>
            <person name="Somerville C.R."/>
        </authorList>
    </citation>
    <scope>NUCLEOTIDE SEQUENCE [MRNA]</scope>
    <scope>FUNCTION</scope>
    <scope>BIOPHYSICOCHEMICAL PROPERTIES</scope>
    <source>
        <strain>FGSC A4 / ATCC 38163 / CBS 112.46 / NRRL 194 / M139</strain>
    </source>
</reference>
<reference key="2">
    <citation type="journal article" date="2005" name="Nature">
        <title>Sequencing of Aspergillus nidulans and comparative analysis with A. fumigatus and A. oryzae.</title>
        <authorList>
            <person name="Galagan J.E."/>
            <person name="Calvo S.E."/>
            <person name="Cuomo C."/>
            <person name="Ma L.-J."/>
            <person name="Wortman J.R."/>
            <person name="Batzoglou S."/>
            <person name="Lee S.-I."/>
            <person name="Bastuerkmen M."/>
            <person name="Spevak C.C."/>
            <person name="Clutterbuck J."/>
            <person name="Kapitonov V."/>
            <person name="Jurka J."/>
            <person name="Scazzocchio C."/>
            <person name="Farman M.L."/>
            <person name="Butler J."/>
            <person name="Purcell S."/>
            <person name="Harris S."/>
            <person name="Braus G.H."/>
            <person name="Draht O."/>
            <person name="Busch S."/>
            <person name="D'Enfert C."/>
            <person name="Bouchier C."/>
            <person name="Goldman G.H."/>
            <person name="Bell-Pedersen D."/>
            <person name="Griffiths-Jones S."/>
            <person name="Doonan J.H."/>
            <person name="Yu J."/>
            <person name="Vienken K."/>
            <person name="Pain A."/>
            <person name="Freitag M."/>
            <person name="Selker E.U."/>
            <person name="Archer D.B."/>
            <person name="Penalva M.A."/>
            <person name="Oakley B.R."/>
            <person name="Momany M."/>
            <person name="Tanaka T."/>
            <person name="Kumagai T."/>
            <person name="Asai K."/>
            <person name="Machida M."/>
            <person name="Nierman W.C."/>
            <person name="Denning D.W."/>
            <person name="Caddick M.X."/>
            <person name="Hynes M."/>
            <person name="Paoletti M."/>
            <person name="Fischer R."/>
            <person name="Miller B.L."/>
            <person name="Dyer P.S."/>
            <person name="Sachs M.S."/>
            <person name="Osmani S.A."/>
            <person name="Birren B.W."/>
        </authorList>
    </citation>
    <scope>NUCLEOTIDE SEQUENCE [LARGE SCALE GENOMIC DNA]</scope>
    <source>
        <strain>FGSC A4 / ATCC 38163 / CBS 112.46 / NRRL 194 / M139</strain>
    </source>
</reference>
<reference key="3">
    <citation type="journal article" date="2009" name="Fungal Genet. Biol.">
        <title>The 2008 update of the Aspergillus nidulans genome annotation: a community effort.</title>
        <authorList>
            <person name="Wortman J.R."/>
            <person name="Gilsenan J.M."/>
            <person name="Joardar V."/>
            <person name="Deegan J."/>
            <person name="Clutterbuck J."/>
            <person name="Andersen M.R."/>
            <person name="Archer D."/>
            <person name="Bencina M."/>
            <person name="Braus G."/>
            <person name="Coutinho P."/>
            <person name="von Dohren H."/>
            <person name="Doonan J."/>
            <person name="Driessen A.J."/>
            <person name="Durek P."/>
            <person name="Espeso E."/>
            <person name="Fekete E."/>
            <person name="Flipphi M."/>
            <person name="Estrada C.G."/>
            <person name="Geysens S."/>
            <person name="Goldman G."/>
            <person name="de Groot P.W."/>
            <person name="Hansen K."/>
            <person name="Harris S.D."/>
            <person name="Heinekamp T."/>
            <person name="Helmstaedt K."/>
            <person name="Henrissat B."/>
            <person name="Hofmann G."/>
            <person name="Homan T."/>
            <person name="Horio T."/>
            <person name="Horiuchi H."/>
            <person name="James S."/>
            <person name="Jones M."/>
            <person name="Karaffa L."/>
            <person name="Karanyi Z."/>
            <person name="Kato M."/>
            <person name="Keller N."/>
            <person name="Kelly D.E."/>
            <person name="Kiel J.A."/>
            <person name="Kim J.M."/>
            <person name="van der Klei I.J."/>
            <person name="Klis F.M."/>
            <person name="Kovalchuk A."/>
            <person name="Krasevec N."/>
            <person name="Kubicek C.P."/>
            <person name="Liu B."/>
            <person name="Maccabe A."/>
            <person name="Meyer V."/>
            <person name="Mirabito P."/>
            <person name="Miskei M."/>
            <person name="Mos M."/>
            <person name="Mullins J."/>
            <person name="Nelson D.R."/>
            <person name="Nielsen J."/>
            <person name="Oakley B.R."/>
            <person name="Osmani S.A."/>
            <person name="Pakula T."/>
            <person name="Paszewski A."/>
            <person name="Paulsen I."/>
            <person name="Pilsyk S."/>
            <person name="Pocsi I."/>
            <person name="Punt P.J."/>
            <person name="Ram A.F."/>
            <person name="Ren Q."/>
            <person name="Robellet X."/>
            <person name="Robson G."/>
            <person name="Seiboth B."/>
            <person name="van Solingen P."/>
            <person name="Specht T."/>
            <person name="Sun J."/>
            <person name="Taheri-Talesh N."/>
            <person name="Takeshita N."/>
            <person name="Ussery D."/>
            <person name="vanKuyk P.A."/>
            <person name="Visser H."/>
            <person name="van de Vondervoort P.J."/>
            <person name="de Vries R.P."/>
            <person name="Walton J."/>
            <person name="Xiang X."/>
            <person name="Xiong Y."/>
            <person name="Zeng A.P."/>
            <person name="Brandt B.W."/>
            <person name="Cornell M.J."/>
            <person name="van den Hondel C.A."/>
            <person name="Visser J."/>
            <person name="Oliver S.G."/>
            <person name="Turner G."/>
        </authorList>
    </citation>
    <scope>GENOME REANNOTATION</scope>
    <source>
        <strain>FGSC A4 / ATCC 38163 / CBS 112.46 / NRRL 194 / M139</strain>
    </source>
</reference>
<name>BGLB_EMENI</name>
<protein>
    <recommendedName>
        <fullName>Beta-glucosidase B</fullName>
        <ecNumber>3.2.1.21</ecNumber>
    </recommendedName>
    <alternativeName>
        <fullName>Beta-D-glucoside glucohydrolase B</fullName>
    </alternativeName>
    <alternativeName>
        <fullName>Cellobiase B</fullName>
    </alternativeName>
    <alternativeName>
        <fullName>Gentiobiase B</fullName>
    </alternativeName>
</protein>
<proteinExistence type="evidence at protein level"/>
<organism>
    <name type="scientific">Emericella nidulans (strain FGSC A4 / ATCC 38163 / CBS 112.46 / NRRL 194 / M139)</name>
    <name type="common">Aspergillus nidulans</name>
    <dbReference type="NCBI Taxonomy" id="227321"/>
    <lineage>
        <taxon>Eukaryota</taxon>
        <taxon>Fungi</taxon>
        <taxon>Dikarya</taxon>
        <taxon>Ascomycota</taxon>
        <taxon>Pezizomycotina</taxon>
        <taxon>Eurotiomycetes</taxon>
        <taxon>Eurotiomycetidae</taxon>
        <taxon>Eurotiales</taxon>
        <taxon>Aspergillaceae</taxon>
        <taxon>Aspergillus</taxon>
        <taxon>Aspergillus subgen. Nidulantes</taxon>
    </lineage>
</organism>
<comment type="function">
    <text evidence="4">Beta-glucosidases are one of a number of cellulolytic enzymes involved in the degradation of cellulosic biomass. Catalyzes the last step releasing glucose from the inhibitory cellobiose.</text>
</comment>
<comment type="catalytic activity">
    <reaction>
        <text>Hydrolysis of terminal, non-reducing beta-D-glucosyl residues with release of beta-D-glucose.</text>
        <dbReference type="EC" id="3.2.1.21"/>
    </reaction>
</comment>
<comment type="biophysicochemical properties">
    <phDependence>
        <text evidence="4">Optimum pH is 5.5.</text>
    </phDependence>
    <temperatureDependence>
        <text evidence="4">Optimum temperature is 52 degrees Celsius.</text>
    </temperatureDependence>
</comment>
<comment type="pathway">
    <text>Glycan metabolism; cellulose degradation.</text>
</comment>
<comment type="similarity">
    <text evidence="5">Belongs to the glycosyl hydrolase 3 family.</text>
</comment>